<evidence type="ECO:0000255" key="1">
    <source>
        <dbReference type="HAMAP-Rule" id="MF_00332"/>
    </source>
</evidence>
<evidence type="ECO:0000256" key="2">
    <source>
        <dbReference type="SAM" id="MobiDB-lite"/>
    </source>
</evidence>
<comment type="function">
    <text evidence="1">Acts as a chaperone.</text>
</comment>
<comment type="induction">
    <text evidence="1">By stress conditions e.g. heat shock.</text>
</comment>
<comment type="similarity">
    <text evidence="1">Belongs to the heat shock protein 70 family.</text>
</comment>
<name>DNAK_KARMG</name>
<proteinExistence type="inferred from homology"/>
<organism>
    <name type="scientific">Karelsulcia muelleri (strain GWSS)</name>
    <name type="common">Sulcia muelleri</name>
    <dbReference type="NCBI Taxonomy" id="444179"/>
    <lineage>
        <taxon>Bacteria</taxon>
        <taxon>Pseudomonadati</taxon>
        <taxon>Bacteroidota</taxon>
        <taxon>Flavobacteriia</taxon>
        <taxon>Flavobacteriales</taxon>
        <taxon>Candidatus Karelsulcia</taxon>
    </lineage>
</organism>
<sequence>MSKIIGIDLGTTNSCVSVMEGNSPVVVPNSEGKRTTPSIIAFIEGGETKVGDPAKRQAVTNPSKTIFSIKRFMGRNFSEVTEELKNIPYKIIKGENDTPRVSIGNKLYTPQEISAMILQKMKKTAEDYLGNEVKQAVITVPAYFNDAQRQATKEAGEIAGLNVERIINEPTAAALAYGLDKNNQNKKIVVYDLGGGTFDISILELGDGVFEVLSTSGDTHLGGDDFDKVIIDWLVKEFKVEQGVDLSNDSMAYQRLKESAEKAKIELSSSTKTEINLPYITATPSGPKHLVKTLTRAKFEELSDDLIKRSLYPCKNALKASNLISKDIDEVILVGGSTRIPKIQEQVEKFFEKIPSKGVNPDEVVSIGAAIQGGVLSGDVKDVLLLDVTPLSLGIETLGGVFTKLIDSNTTIPTKKSEIFSTATDNQSAVTIRVGQGERSMFNDNKEIGRFDLIDIAPAPRGIPQIEVTFDIDANGILNVSAKDKSTGKEQSIRIQASSGLSKNEIERMKKEAQENADKDNKIKEEIEKINSADSIIFQTEKQLKEYGNKISEETKKKLEINLNNLKDARNSKNISDIDNYINKINNILSSSYQEIYKNNESVKNNESVKNNESVKNNESVKDVDFEEIK</sequence>
<reference key="1">
    <citation type="journal article" date="2007" name="Proc. Natl. Acad. Sci. U.S.A.">
        <title>Parallel genomic evolution and metabolic interdependence in an ancient symbiosis.</title>
        <authorList>
            <person name="McCutcheon J.P."/>
            <person name="Moran N.A."/>
        </authorList>
    </citation>
    <scope>NUCLEOTIDE SEQUENCE [LARGE SCALE GENOMIC DNA]</scope>
    <source>
        <strain>GWSS</strain>
    </source>
</reference>
<feature type="chain" id="PRO_1000079252" description="Chaperone protein DnaK">
    <location>
        <begin position="1"/>
        <end position="630"/>
    </location>
</feature>
<feature type="region of interest" description="Disordered" evidence="2">
    <location>
        <begin position="604"/>
        <end position="630"/>
    </location>
</feature>
<feature type="compositionally biased region" description="Polar residues" evidence="2">
    <location>
        <begin position="604"/>
        <end position="618"/>
    </location>
</feature>
<feature type="compositionally biased region" description="Basic and acidic residues" evidence="2">
    <location>
        <begin position="619"/>
        <end position="630"/>
    </location>
</feature>
<feature type="modified residue" description="Phosphothreonine; by autocatalysis" evidence="1">
    <location>
        <position position="197"/>
    </location>
</feature>
<protein>
    <recommendedName>
        <fullName evidence="1">Chaperone protein DnaK</fullName>
    </recommendedName>
    <alternativeName>
        <fullName evidence="1">HSP70</fullName>
    </alternativeName>
    <alternativeName>
        <fullName evidence="1">Heat shock 70 kDa protein</fullName>
    </alternativeName>
    <alternativeName>
        <fullName evidence="1">Heat shock protein 70</fullName>
    </alternativeName>
</protein>
<gene>
    <name evidence="1" type="primary">dnaK</name>
    <name type="ordered locus">SMGWSS_091</name>
</gene>
<keyword id="KW-0067">ATP-binding</keyword>
<keyword id="KW-0143">Chaperone</keyword>
<keyword id="KW-0547">Nucleotide-binding</keyword>
<keyword id="KW-0597">Phosphoprotein</keyword>
<keyword id="KW-0346">Stress response</keyword>
<accession>A8Z5V5</accession>
<dbReference type="EMBL" id="CP000770">
    <property type="protein sequence ID" value="ABS30506.1"/>
    <property type="molecule type" value="Genomic_DNA"/>
</dbReference>
<dbReference type="SMR" id="A8Z5V5"/>
<dbReference type="STRING" id="444179.SMGWSS_091"/>
<dbReference type="KEGG" id="smg:SMGWSS_091"/>
<dbReference type="HOGENOM" id="CLU_005965_2_4_10"/>
<dbReference type="Proteomes" id="UP000000781">
    <property type="component" value="Chromosome"/>
</dbReference>
<dbReference type="GO" id="GO:0005524">
    <property type="term" value="F:ATP binding"/>
    <property type="evidence" value="ECO:0007669"/>
    <property type="project" value="UniProtKB-UniRule"/>
</dbReference>
<dbReference type="GO" id="GO:0140662">
    <property type="term" value="F:ATP-dependent protein folding chaperone"/>
    <property type="evidence" value="ECO:0007669"/>
    <property type="project" value="InterPro"/>
</dbReference>
<dbReference type="GO" id="GO:0051082">
    <property type="term" value="F:unfolded protein binding"/>
    <property type="evidence" value="ECO:0007669"/>
    <property type="project" value="InterPro"/>
</dbReference>
<dbReference type="CDD" id="cd10234">
    <property type="entry name" value="ASKHA_NBD_HSP70_DnaK-like"/>
    <property type="match status" value="1"/>
</dbReference>
<dbReference type="FunFam" id="2.60.34.10:FF:000014">
    <property type="entry name" value="Chaperone protein DnaK HSP70"/>
    <property type="match status" value="1"/>
</dbReference>
<dbReference type="FunFam" id="3.30.420.40:FF:000020">
    <property type="entry name" value="Chaperone protein HscA homolog"/>
    <property type="match status" value="1"/>
</dbReference>
<dbReference type="FunFam" id="3.30.30.30:FF:000005">
    <property type="entry name" value="Heat shock protein ssb1"/>
    <property type="match status" value="1"/>
</dbReference>
<dbReference type="FunFam" id="3.30.420.40:FF:000004">
    <property type="entry name" value="Molecular chaperone DnaK"/>
    <property type="match status" value="1"/>
</dbReference>
<dbReference type="FunFam" id="3.90.640.10:FF:000003">
    <property type="entry name" value="Molecular chaperone DnaK"/>
    <property type="match status" value="1"/>
</dbReference>
<dbReference type="Gene3D" id="1.20.1270.10">
    <property type="match status" value="1"/>
</dbReference>
<dbReference type="Gene3D" id="3.30.420.40">
    <property type="match status" value="2"/>
</dbReference>
<dbReference type="Gene3D" id="3.90.640.10">
    <property type="entry name" value="Actin, Chain A, domain 4"/>
    <property type="match status" value="1"/>
</dbReference>
<dbReference type="Gene3D" id="2.60.34.10">
    <property type="entry name" value="Substrate Binding Domain Of DNAk, Chain A, domain 1"/>
    <property type="match status" value="1"/>
</dbReference>
<dbReference type="HAMAP" id="MF_00332">
    <property type="entry name" value="DnaK"/>
    <property type="match status" value="1"/>
</dbReference>
<dbReference type="InterPro" id="IPR043129">
    <property type="entry name" value="ATPase_NBD"/>
</dbReference>
<dbReference type="InterPro" id="IPR012725">
    <property type="entry name" value="Chaperone_DnaK"/>
</dbReference>
<dbReference type="InterPro" id="IPR018181">
    <property type="entry name" value="Heat_shock_70_CS"/>
</dbReference>
<dbReference type="InterPro" id="IPR029048">
    <property type="entry name" value="HSP70_C_sf"/>
</dbReference>
<dbReference type="InterPro" id="IPR029047">
    <property type="entry name" value="HSP70_peptide-bd_sf"/>
</dbReference>
<dbReference type="InterPro" id="IPR013126">
    <property type="entry name" value="Hsp_70_fam"/>
</dbReference>
<dbReference type="NCBIfam" id="NF001413">
    <property type="entry name" value="PRK00290.1"/>
    <property type="match status" value="1"/>
</dbReference>
<dbReference type="NCBIfam" id="NF003520">
    <property type="entry name" value="PRK05183.1"/>
    <property type="match status" value="1"/>
</dbReference>
<dbReference type="NCBIfam" id="TIGR02350">
    <property type="entry name" value="prok_dnaK"/>
    <property type="match status" value="1"/>
</dbReference>
<dbReference type="PANTHER" id="PTHR19375">
    <property type="entry name" value="HEAT SHOCK PROTEIN 70KDA"/>
    <property type="match status" value="1"/>
</dbReference>
<dbReference type="Pfam" id="PF00012">
    <property type="entry name" value="HSP70"/>
    <property type="match status" value="1"/>
</dbReference>
<dbReference type="PRINTS" id="PR00301">
    <property type="entry name" value="HEATSHOCK70"/>
</dbReference>
<dbReference type="SUPFAM" id="SSF53067">
    <property type="entry name" value="Actin-like ATPase domain"/>
    <property type="match status" value="2"/>
</dbReference>
<dbReference type="SUPFAM" id="SSF100920">
    <property type="entry name" value="Heat shock protein 70kD (HSP70), peptide-binding domain"/>
    <property type="match status" value="1"/>
</dbReference>
<dbReference type="PROSITE" id="PS00297">
    <property type="entry name" value="HSP70_1"/>
    <property type="match status" value="1"/>
</dbReference>
<dbReference type="PROSITE" id="PS00329">
    <property type="entry name" value="HSP70_2"/>
    <property type="match status" value="1"/>
</dbReference>
<dbReference type="PROSITE" id="PS01036">
    <property type="entry name" value="HSP70_3"/>
    <property type="match status" value="1"/>
</dbReference>